<feature type="chain" id="PRO_0000347921" description="Sensor protein kinase GraS">
    <location>
        <begin position="1"/>
        <end position="346"/>
    </location>
</feature>
<feature type="transmembrane region" description="Helical" evidence="2">
    <location>
        <begin position="15"/>
        <end position="35"/>
    </location>
</feature>
<feature type="transmembrane region" description="Helical" evidence="2">
    <location>
        <begin position="43"/>
        <end position="63"/>
    </location>
</feature>
<feature type="domain" description="Histidine kinase" evidence="3">
    <location>
        <begin position="126"/>
        <end position="332"/>
    </location>
</feature>
<feature type="mutagenesis site" description="About 50% increased resistance to host cationic antimicrobial peptides." evidence="4">
    <original>D</original>
    <variation>A</variation>
    <location>
        <position position="37"/>
    </location>
</feature>
<feature type="mutagenesis site" description="About 50% decreased resistance to host cationic antimicrobial peptides." evidence="4">
    <original>P</original>
    <variation>A</variation>
    <location>
        <position position="39"/>
    </location>
</feature>
<feature type="mutagenesis site" description="About 50% decreased resistance to host cationic antimicrobial peptides." evidence="4">
    <original>P</original>
    <variation>S</variation>
    <location>
        <position position="39"/>
    </location>
</feature>
<comment type="function">
    <text evidence="1 4 5">Member of the two-component regulatory system GraR/GraS involved in resistance against cationic antimicrobial peptides (CAMPs) (PubMed:25287929, PubMed:26597988). Functions as a sensor protein kinase which phosphorylates GraR through the auxiliary protein GraX. In turn, GraR up-regulates many genes such as adhesins, exoproteins, transporters, toxins, and proteins involved in cell wall synthesis. Down-regulates the expression of many genes involved in RNA and amino acid synthesis or glycolysis (By similarity).</text>
</comment>
<comment type="catalytic activity">
    <reaction>
        <text>ATP + protein L-histidine = ADP + protein N-phospho-L-histidine.</text>
        <dbReference type="EC" id="2.7.13.3"/>
    </reaction>
</comment>
<comment type="subunit">
    <text evidence="1">Interacts with GraX.</text>
</comment>
<comment type="subcellular location">
    <subcellularLocation>
        <location evidence="6">Cell membrane</location>
        <topology evidence="6">Multi-pass membrane protein</topology>
    </subcellularLocation>
</comment>
<comment type="disruption phenotype">
    <text evidence="4 5">Deletion leads to complete loss of resistance towards host cationic antimicrobial peptides (CAPs).</text>
</comment>
<sequence length="346" mass="41045">MNNLKWVAYFLKSRMNWIFWILFLNLLMLGISLIDYDFPIDSLFYIVSLNLSLTMIFLILTYFKEVKLYKHFDKDKEIEEIKHKDLAETPFQRHTVDYLYRQISAHKEKVVEQQLQLNMHEQTITEFVHDIKTPVTAMKLLIDQEKNQERKQALLYEWSRINSMLDTQLYITRLESQRKDMYFDYVSLKRMVIDEIQLTRHISQVKGIGFDVDFKVDDYVYTDIKWCRMIIRQILSNALKYSENFNIEIGTELNDQHVSLYIKDYGRGISKKDMPRIFERGFTSTANRNETTSSGMGLYLVNSVKDQLGIHLQVTSTVGKGTTVRLIFPLQNEIVERMSEVTNLSF</sequence>
<proteinExistence type="evidence at protein level"/>
<accession>Q8NXR5</accession>
<reference key="1">
    <citation type="journal article" date="2002" name="Lancet">
        <title>Genome and virulence determinants of high virulence community-acquired MRSA.</title>
        <authorList>
            <person name="Baba T."/>
            <person name="Takeuchi F."/>
            <person name="Kuroda M."/>
            <person name="Yuzawa H."/>
            <person name="Aoki K."/>
            <person name="Oguchi A."/>
            <person name="Nagai Y."/>
            <person name="Iwama N."/>
            <person name="Asano K."/>
            <person name="Naimi T."/>
            <person name="Kuroda H."/>
            <person name="Cui L."/>
            <person name="Yamamoto K."/>
            <person name="Hiramatsu K."/>
        </authorList>
    </citation>
    <scope>NUCLEOTIDE SEQUENCE [LARGE SCALE GENOMIC DNA]</scope>
    <source>
        <strain>MW2</strain>
    </source>
</reference>
<reference key="2">
    <citation type="journal article" date="2014" name="Infect. Immun.">
        <title>Site-specific mutation of the sensor kinase GraS in Staphylococcus aureus alters the adaptive response to distinct cationic antimicrobial peptides.</title>
        <authorList>
            <person name="Cheung A.L."/>
            <person name="Bayer A.S."/>
            <person name="Yeaman M.R."/>
            <person name="Xiong Y.Q."/>
            <person name="Waring A.J."/>
            <person name="Memmi G."/>
            <person name="Donegan N."/>
            <person name="Chaili S."/>
            <person name="Yang S.J."/>
        </authorList>
    </citation>
    <scope>FUNCTION</scope>
    <scope>DISRUPTION PHENOTYPE</scope>
    <scope>MUTAGENESIS OF ASP-37 AND PRO-39</scope>
</reference>
<reference key="3">
    <citation type="journal article" date="2016" name="Infect. Immun.">
        <title>The GraS Sensor in Staphylococcus aureus Mediates Resistance to Host Defense Peptides Differing in Mechanisms of Action.</title>
        <authorList>
            <person name="Chaili S."/>
            <person name="Cheung A.L."/>
            <person name="Bayer A.S."/>
            <person name="Xiong Y.Q."/>
            <person name="Waring A.J."/>
            <person name="Memmi G."/>
            <person name="Donegan N."/>
            <person name="Yang S.J."/>
            <person name="Yeaman M.R."/>
        </authorList>
    </citation>
    <scope>FUNCTION</scope>
    <scope>DISRUPTION PHENOTYPE</scope>
</reference>
<protein>
    <recommendedName>
        <fullName>Sensor protein kinase GraS</fullName>
        <ecNumber>2.7.13.3</ecNumber>
    </recommendedName>
    <alternativeName>
        <fullName>Glycopeptide resistance-associated protein S</fullName>
    </alternativeName>
</protein>
<evidence type="ECO:0000250" key="1">
    <source>
        <dbReference type="UniProtKB" id="Q2G0D9"/>
    </source>
</evidence>
<evidence type="ECO:0000255" key="2"/>
<evidence type="ECO:0000255" key="3">
    <source>
        <dbReference type="PROSITE-ProRule" id="PRU00107"/>
    </source>
</evidence>
<evidence type="ECO:0000269" key="4">
    <source>
    </source>
</evidence>
<evidence type="ECO:0000269" key="5">
    <source>
    </source>
</evidence>
<evidence type="ECO:0000305" key="6"/>
<gene>
    <name type="primary">graS</name>
    <name type="ordered locus">MW0622</name>
</gene>
<organism>
    <name type="scientific">Staphylococcus aureus (strain MW2)</name>
    <dbReference type="NCBI Taxonomy" id="196620"/>
    <lineage>
        <taxon>Bacteria</taxon>
        <taxon>Bacillati</taxon>
        <taxon>Bacillota</taxon>
        <taxon>Bacilli</taxon>
        <taxon>Bacillales</taxon>
        <taxon>Staphylococcaceae</taxon>
        <taxon>Staphylococcus</taxon>
    </lineage>
</organism>
<keyword id="KW-0046">Antibiotic resistance</keyword>
<keyword id="KW-0067">ATP-binding</keyword>
<keyword id="KW-1003">Cell membrane</keyword>
<keyword id="KW-0418">Kinase</keyword>
<keyword id="KW-0472">Membrane</keyword>
<keyword id="KW-0547">Nucleotide-binding</keyword>
<keyword id="KW-0808">Transferase</keyword>
<keyword id="KW-0812">Transmembrane</keyword>
<keyword id="KW-1133">Transmembrane helix</keyword>
<keyword id="KW-0902">Two-component regulatory system</keyword>
<keyword id="KW-0843">Virulence</keyword>
<dbReference type="EC" id="2.7.13.3"/>
<dbReference type="EMBL" id="BA000033">
    <property type="protein sequence ID" value="BAB94487.1"/>
    <property type="molecule type" value="Genomic_DNA"/>
</dbReference>
<dbReference type="RefSeq" id="WP_001061262.1">
    <property type="nucleotide sequence ID" value="NC_003923.1"/>
</dbReference>
<dbReference type="SMR" id="Q8NXR5"/>
<dbReference type="KEGG" id="sam:MW0622"/>
<dbReference type="HOGENOM" id="CLU_000445_13_1_9"/>
<dbReference type="GO" id="GO:0005886">
    <property type="term" value="C:plasma membrane"/>
    <property type="evidence" value="ECO:0007669"/>
    <property type="project" value="UniProtKB-SubCell"/>
</dbReference>
<dbReference type="GO" id="GO:0005524">
    <property type="term" value="F:ATP binding"/>
    <property type="evidence" value="ECO:0007669"/>
    <property type="project" value="UniProtKB-KW"/>
</dbReference>
<dbReference type="GO" id="GO:0004721">
    <property type="term" value="F:phosphoprotein phosphatase activity"/>
    <property type="evidence" value="ECO:0007669"/>
    <property type="project" value="TreeGrafter"/>
</dbReference>
<dbReference type="GO" id="GO:0000155">
    <property type="term" value="F:phosphorelay sensor kinase activity"/>
    <property type="evidence" value="ECO:0007669"/>
    <property type="project" value="InterPro"/>
</dbReference>
<dbReference type="GO" id="GO:0016036">
    <property type="term" value="P:cellular response to phosphate starvation"/>
    <property type="evidence" value="ECO:0007669"/>
    <property type="project" value="TreeGrafter"/>
</dbReference>
<dbReference type="GO" id="GO:0046677">
    <property type="term" value="P:response to antibiotic"/>
    <property type="evidence" value="ECO:0007669"/>
    <property type="project" value="UniProtKB-KW"/>
</dbReference>
<dbReference type="Gene3D" id="3.30.565.10">
    <property type="entry name" value="Histidine kinase-like ATPase, C-terminal domain"/>
    <property type="match status" value="1"/>
</dbReference>
<dbReference type="InterPro" id="IPR050351">
    <property type="entry name" value="2-comp_sensor_kinase"/>
</dbReference>
<dbReference type="InterPro" id="IPR036890">
    <property type="entry name" value="HATPase_C_sf"/>
</dbReference>
<dbReference type="InterPro" id="IPR005467">
    <property type="entry name" value="His_kinase_dom"/>
</dbReference>
<dbReference type="InterPro" id="IPR036097">
    <property type="entry name" value="HisK_dim/P_sf"/>
</dbReference>
<dbReference type="InterPro" id="IPR004358">
    <property type="entry name" value="Sig_transdc_His_kin-like_C"/>
</dbReference>
<dbReference type="PANTHER" id="PTHR45453:SF2">
    <property type="entry name" value="HISTIDINE KINASE"/>
    <property type="match status" value="1"/>
</dbReference>
<dbReference type="PANTHER" id="PTHR45453">
    <property type="entry name" value="PHOSPHATE REGULON SENSOR PROTEIN PHOR"/>
    <property type="match status" value="1"/>
</dbReference>
<dbReference type="Pfam" id="PF02518">
    <property type="entry name" value="HATPase_c"/>
    <property type="match status" value="1"/>
</dbReference>
<dbReference type="PRINTS" id="PR00344">
    <property type="entry name" value="BCTRLSENSOR"/>
</dbReference>
<dbReference type="SMART" id="SM00387">
    <property type="entry name" value="HATPase_c"/>
    <property type="match status" value="1"/>
</dbReference>
<dbReference type="SUPFAM" id="SSF55874">
    <property type="entry name" value="ATPase domain of HSP90 chaperone/DNA topoisomerase II/histidine kinase"/>
    <property type="match status" value="1"/>
</dbReference>
<dbReference type="SUPFAM" id="SSF47384">
    <property type="entry name" value="Homodimeric domain of signal transducing histidine kinase"/>
    <property type="match status" value="1"/>
</dbReference>
<dbReference type="PROSITE" id="PS50109">
    <property type="entry name" value="HIS_KIN"/>
    <property type="match status" value="1"/>
</dbReference>
<name>GRAS_STAAW</name>